<name>RNH3_LISMO</name>
<gene>
    <name evidence="1" type="primary">rnhC</name>
    <name type="ordered locus">lmo1228</name>
</gene>
<accession>Q8Y7P5</accession>
<proteinExistence type="inferred from homology"/>
<reference key="1">
    <citation type="journal article" date="2001" name="Science">
        <title>Comparative genomics of Listeria species.</title>
        <authorList>
            <person name="Glaser P."/>
            <person name="Frangeul L."/>
            <person name="Buchrieser C."/>
            <person name="Rusniok C."/>
            <person name="Amend A."/>
            <person name="Baquero F."/>
            <person name="Berche P."/>
            <person name="Bloecker H."/>
            <person name="Brandt P."/>
            <person name="Chakraborty T."/>
            <person name="Charbit A."/>
            <person name="Chetouani F."/>
            <person name="Couve E."/>
            <person name="de Daruvar A."/>
            <person name="Dehoux P."/>
            <person name="Domann E."/>
            <person name="Dominguez-Bernal G."/>
            <person name="Duchaud E."/>
            <person name="Durant L."/>
            <person name="Dussurget O."/>
            <person name="Entian K.-D."/>
            <person name="Fsihi H."/>
            <person name="Garcia-del Portillo F."/>
            <person name="Garrido P."/>
            <person name="Gautier L."/>
            <person name="Goebel W."/>
            <person name="Gomez-Lopez N."/>
            <person name="Hain T."/>
            <person name="Hauf J."/>
            <person name="Jackson D."/>
            <person name="Jones L.-M."/>
            <person name="Kaerst U."/>
            <person name="Kreft J."/>
            <person name="Kuhn M."/>
            <person name="Kunst F."/>
            <person name="Kurapkat G."/>
            <person name="Madueno E."/>
            <person name="Maitournam A."/>
            <person name="Mata Vicente J."/>
            <person name="Ng E."/>
            <person name="Nedjari H."/>
            <person name="Nordsiek G."/>
            <person name="Novella S."/>
            <person name="de Pablos B."/>
            <person name="Perez-Diaz J.-C."/>
            <person name="Purcell R."/>
            <person name="Remmel B."/>
            <person name="Rose M."/>
            <person name="Schlueter T."/>
            <person name="Simoes N."/>
            <person name="Tierrez A."/>
            <person name="Vazquez-Boland J.-A."/>
            <person name="Voss H."/>
            <person name="Wehland J."/>
            <person name="Cossart P."/>
        </authorList>
    </citation>
    <scope>NUCLEOTIDE SEQUENCE [LARGE SCALE GENOMIC DNA]</scope>
    <source>
        <strain>ATCC BAA-679 / EGD-e</strain>
    </source>
</reference>
<evidence type="ECO:0000255" key="1">
    <source>
        <dbReference type="HAMAP-Rule" id="MF_00053"/>
    </source>
</evidence>
<evidence type="ECO:0000255" key="2">
    <source>
        <dbReference type="PROSITE-ProRule" id="PRU01319"/>
    </source>
</evidence>
<comment type="function">
    <text evidence="1">Endonuclease that specifically degrades the RNA of RNA-DNA hybrids.</text>
</comment>
<comment type="catalytic activity">
    <reaction evidence="1">
        <text>Endonucleolytic cleavage to 5'-phosphomonoester.</text>
        <dbReference type="EC" id="3.1.26.4"/>
    </reaction>
</comment>
<comment type="cofactor">
    <cofactor evidence="1">
        <name>Mn(2+)</name>
        <dbReference type="ChEBI" id="CHEBI:29035"/>
    </cofactor>
    <cofactor evidence="1">
        <name>Mg(2+)</name>
        <dbReference type="ChEBI" id="CHEBI:18420"/>
    </cofactor>
    <text evidence="1">Manganese or magnesium. Binds 1 divalent metal ion per monomer in the absence of substrate. May bind a second metal ion after substrate binding.</text>
</comment>
<comment type="subcellular location">
    <subcellularLocation>
        <location evidence="1">Cytoplasm</location>
    </subcellularLocation>
</comment>
<comment type="similarity">
    <text evidence="1">Belongs to the RNase HII family. RnhC subfamily.</text>
</comment>
<protein>
    <recommendedName>
        <fullName evidence="1">Ribonuclease HIII</fullName>
        <shortName evidence="1">RNase HIII</shortName>
        <ecNumber evidence="1">3.1.26.4</ecNumber>
    </recommendedName>
</protein>
<keyword id="KW-0963">Cytoplasm</keyword>
<keyword id="KW-0255">Endonuclease</keyword>
<keyword id="KW-0378">Hydrolase</keyword>
<keyword id="KW-0460">Magnesium</keyword>
<keyword id="KW-0479">Metal-binding</keyword>
<keyword id="KW-0540">Nuclease</keyword>
<keyword id="KW-1185">Reference proteome</keyword>
<feature type="chain" id="PRO_0000111689" description="Ribonuclease HIII">
    <location>
        <begin position="1"/>
        <end position="308"/>
    </location>
</feature>
<feature type="domain" description="RNase H type-2" evidence="2">
    <location>
        <begin position="91"/>
        <end position="308"/>
    </location>
</feature>
<feature type="binding site" evidence="1">
    <location>
        <position position="97"/>
    </location>
    <ligand>
        <name>a divalent metal cation</name>
        <dbReference type="ChEBI" id="CHEBI:60240"/>
    </ligand>
</feature>
<feature type="binding site" evidence="1">
    <location>
        <position position="98"/>
    </location>
    <ligand>
        <name>a divalent metal cation</name>
        <dbReference type="ChEBI" id="CHEBI:60240"/>
    </ligand>
</feature>
<feature type="binding site" evidence="1">
    <location>
        <position position="202"/>
    </location>
    <ligand>
        <name>a divalent metal cation</name>
        <dbReference type="ChEBI" id="CHEBI:60240"/>
    </ligand>
</feature>
<sequence length="308" mass="33758">MANTVILVDQPTLEKMKQTYLPFSNPKLPPGAVFAAKKPGVSITGYKSRKVMFQGVNGEAEAKKWVATLPESKAKAPSVSKGILPANFASKNVIGSDEVGTGDFFGPITVCAAYVDAEMMPLLKELGVKDSKAMKDPEICRIAEKIMPLVPHSVLLCPNPKYNELQKRGMNQGQMKALLHNRAIENVLKKLAPIKPEAILIDQFAEKNTYYRYLAKEPSIIREDVFFATKAEGLHLSVAAASIIARYKFVQAFDAMSKEVGIPLPKGAGPHVDAVAAEIIERFGLETLAKYTKQHFANTEKALKMVKK</sequence>
<dbReference type="EC" id="3.1.26.4" evidence="1"/>
<dbReference type="EMBL" id="AL591978">
    <property type="protein sequence ID" value="CAC99306.1"/>
    <property type="molecule type" value="Genomic_DNA"/>
</dbReference>
<dbReference type="PIR" id="AD1228">
    <property type="entry name" value="AD1228"/>
</dbReference>
<dbReference type="RefSeq" id="NP_464753.1">
    <property type="nucleotide sequence ID" value="NC_003210.1"/>
</dbReference>
<dbReference type="RefSeq" id="WP_010989711.1">
    <property type="nucleotide sequence ID" value="NZ_CP149495.1"/>
</dbReference>
<dbReference type="SMR" id="Q8Y7P5"/>
<dbReference type="STRING" id="169963.gene:17593884"/>
<dbReference type="PaxDb" id="169963-lmo1228"/>
<dbReference type="EnsemblBacteria" id="CAC99306">
    <property type="protein sequence ID" value="CAC99306"/>
    <property type="gene ID" value="CAC99306"/>
</dbReference>
<dbReference type="GeneID" id="987663"/>
<dbReference type="KEGG" id="lmo:lmo1228"/>
<dbReference type="PATRIC" id="fig|169963.11.peg.1259"/>
<dbReference type="eggNOG" id="COG1039">
    <property type="taxonomic scope" value="Bacteria"/>
</dbReference>
<dbReference type="HOGENOM" id="CLU_059546_1_0_9"/>
<dbReference type="OrthoDB" id="9777935at2"/>
<dbReference type="PhylomeDB" id="Q8Y7P5"/>
<dbReference type="BioCyc" id="LMON169963:LMO1228-MONOMER"/>
<dbReference type="Proteomes" id="UP000000817">
    <property type="component" value="Chromosome"/>
</dbReference>
<dbReference type="GO" id="GO:0005737">
    <property type="term" value="C:cytoplasm"/>
    <property type="evidence" value="ECO:0007669"/>
    <property type="project" value="UniProtKB-SubCell"/>
</dbReference>
<dbReference type="GO" id="GO:0032299">
    <property type="term" value="C:ribonuclease H2 complex"/>
    <property type="evidence" value="ECO:0000318"/>
    <property type="project" value="GO_Central"/>
</dbReference>
<dbReference type="GO" id="GO:0000287">
    <property type="term" value="F:magnesium ion binding"/>
    <property type="evidence" value="ECO:0007669"/>
    <property type="project" value="UniProtKB-UniRule"/>
</dbReference>
<dbReference type="GO" id="GO:0003723">
    <property type="term" value="F:RNA binding"/>
    <property type="evidence" value="ECO:0007669"/>
    <property type="project" value="InterPro"/>
</dbReference>
<dbReference type="GO" id="GO:0004523">
    <property type="term" value="F:RNA-DNA hybrid ribonuclease activity"/>
    <property type="evidence" value="ECO:0000318"/>
    <property type="project" value="GO_Central"/>
</dbReference>
<dbReference type="GO" id="GO:0043137">
    <property type="term" value="P:DNA replication, removal of RNA primer"/>
    <property type="evidence" value="ECO:0000318"/>
    <property type="project" value="GO_Central"/>
</dbReference>
<dbReference type="GO" id="GO:0006298">
    <property type="term" value="P:mismatch repair"/>
    <property type="evidence" value="ECO:0000318"/>
    <property type="project" value="GO_Central"/>
</dbReference>
<dbReference type="CDD" id="cd06590">
    <property type="entry name" value="RNase_HII_bacteria_HIII_like"/>
    <property type="match status" value="1"/>
</dbReference>
<dbReference type="CDD" id="cd14796">
    <property type="entry name" value="RNAse_HIII_N"/>
    <property type="match status" value="1"/>
</dbReference>
<dbReference type="FunFam" id="3.30.420.10:FF:000047">
    <property type="entry name" value="Ribonuclease HIII"/>
    <property type="match status" value="1"/>
</dbReference>
<dbReference type="Gene3D" id="3.30.420.10">
    <property type="entry name" value="Ribonuclease H-like superfamily/Ribonuclease H"/>
    <property type="match status" value="1"/>
</dbReference>
<dbReference type="Gene3D" id="3.30.310.10">
    <property type="entry name" value="TATA-Binding Protein"/>
    <property type="match status" value="1"/>
</dbReference>
<dbReference type="HAMAP" id="MF_00053">
    <property type="entry name" value="RNase_HIII"/>
    <property type="match status" value="1"/>
</dbReference>
<dbReference type="InterPro" id="IPR001352">
    <property type="entry name" value="RNase_HII/HIII"/>
</dbReference>
<dbReference type="InterPro" id="IPR024567">
    <property type="entry name" value="RNase_HII/HIII_dom"/>
</dbReference>
<dbReference type="InterPro" id="IPR004641">
    <property type="entry name" value="RNase_HIII"/>
</dbReference>
<dbReference type="InterPro" id="IPR024568">
    <property type="entry name" value="RNase_HIII_N"/>
</dbReference>
<dbReference type="InterPro" id="IPR012337">
    <property type="entry name" value="RNaseH-like_sf"/>
</dbReference>
<dbReference type="InterPro" id="IPR036397">
    <property type="entry name" value="RNaseH_sf"/>
</dbReference>
<dbReference type="InterPro" id="IPR012295">
    <property type="entry name" value="TBP_dom_sf"/>
</dbReference>
<dbReference type="NCBIfam" id="TIGR00716">
    <property type="entry name" value="rnhC"/>
    <property type="match status" value="1"/>
</dbReference>
<dbReference type="PANTHER" id="PTHR10954:SF23">
    <property type="entry name" value="RIBONUCLEASE"/>
    <property type="match status" value="1"/>
</dbReference>
<dbReference type="PANTHER" id="PTHR10954">
    <property type="entry name" value="RIBONUCLEASE H2 SUBUNIT A"/>
    <property type="match status" value="1"/>
</dbReference>
<dbReference type="Pfam" id="PF11858">
    <property type="entry name" value="DUF3378"/>
    <property type="match status" value="1"/>
</dbReference>
<dbReference type="Pfam" id="PF01351">
    <property type="entry name" value="RNase_HII"/>
    <property type="match status" value="1"/>
</dbReference>
<dbReference type="PIRSF" id="PIRSF037748">
    <property type="entry name" value="RnhC"/>
    <property type="match status" value="1"/>
</dbReference>
<dbReference type="SUPFAM" id="SSF53098">
    <property type="entry name" value="Ribonuclease H-like"/>
    <property type="match status" value="1"/>
</dbReference>
<dbReference type="PROSITE" id="PS51975">
    <property type="entry name" value="RNASE_H_2"/>
    <property type="match status" value="1"/>
</dbReference>
<organism>
    <name type="scientific">Listeria monocytogenes serovar 1/2a (strain ATCC BAA-679 / EGD-e)</name>
    <dbReference type="NCBI Taxonomy" id="169963"/>
    <lineage>
        <taxon>Bacteria</taxon>
        <taxon>Bacillati</taxon>
        <taxon>Bacillota</taxon>
        <taxon>Bacilli</taxon>
        <taxon>Bacillales</taxon>
        <taxon>Listeriaceae</taxon>
        <taxon>Listeria</taxon>
    </lineage>
</organism>